<sequence>MRHLISMRDIGRDDILRILEESEKMEAVLNEKGHSDILNGKILATLFYEPSTRTRLSFETAMKRLGGNVIGFTDISNTSVTKGESLTDTIKVISGYSDLIVIRHPSEGAARLSSEVSGVPVINAGDGSNQHPTQTLLDLYTIKREVGKIDGLKIAFIGDLKYGRTVHSLCQALSLFKNVELRLISPDELKIPREVLEYIDGKVLLSETSEINIEDVDVVYMTRIQKERFIDLNEYQKVKGTYRLLKEHVLEKNLIIMHPLPRVDEIDSKVDSLNQAKYFKQSFYGVPVRMAILSLLSKDLQK</sequence>
<dbReference type="EC" id="2.1.3.2" evidence="1"/>
<dbReference type="EMBL" id="CP000742">
    <property type="protein sequence ID" value="ABR54862.1"/>
    <property type="molecule type" value="Genomic_DNA"/>
</dbReference>
<dbReference type="RefSeq" id="WP_012065791.1">
    <property type="nucleotide sequence ID" value="NC_009634.1"/>
</dbReference>
<dbReference type="SMR" id="A6UQU0"/>
<dbReference type="STRING" id="406327.Mevan_0959"/>
<dbReference type="GeneID" id="5325899"/>
<dbReference type="KEGG" id="mvn:Mevan_0959"/>
<dbReference type="eggNOG" id="arCOG00911">
    <property type="taxonomic scope" value="Archaea"/>
</dbReference>
<dbReference type="HOGENOM" id="CLU_043846_1_2_2"/>
<dbReference type="OrthoDB" id="7792at2157"/>
<dbReference type="UniPathway" id="UPA00070">
    <property type="reaction ID" value="UER00116"/>
</dbReference>
<dbReference type="Proteomes" id="UP000001107">
    <property type="component" value="Chromosome"/>
</dbReference>
<dbReference type="GO" id="GO:0016597">
    <property type="term" value="F:amino acid binding"/>
    <property type="evidence" value="ECO:0007669"/>
    <property type="project" value="InterPro"/>
</dbReference>
<dbReference type="GO" id="GO:0004070">
    <property type="term" value="F:aspartate carbamoyltransferase activity"/>
    <property type="evidence" value="ECO:0007669"/>
    <property type="project" value="UniProtKB-UniRule"/>
</dbReference>
<dbReference type="GO" id="GO:0006207">
    <property type="term" value="P:'de novo' pyrimidine nucleobase biosynthetic process"/>
    <property type="evidence" value="ECO:0007669"/>
    <property type="project" value="InterPro"/>
</dbReference>
<dbReference type="GO" id="GO:0044205">
    <property type="term" value="P:'de novo' UMP biosynthetic process"/>
    <property type="evidence" value="ECO:0007669"/>
    <property type="project" value="UniProtKB-UniRule"/>
</dbReference>
<dbReference type="GO" id="GO:0006520">
    <property type="term" value="P:amino acid metabolic process"/>
    <property type="evidence" value="ECO:0007669"/>
    <property type="project" value="InterPro"/>
</dbReference>
<dbReference type="FunFam" id="3.40.50.1370:FF:000001">
    <property type="entry name" value="Aspartate carbamoyltransferase"/>
    <property type="match status" value="1"/>
</dbReference>
<dbReference type="FunFam" id="3.40.50.1370:FF:000002">
    <property type="entry name" value="Aspartate carbamoyltransferase 2"/>
    <property type="match status" value="1"/>
</dbReference>
<dbReference type="Gene3D" id="3.40.50.1370">
    <property type="entry name" value="Aspartate/ornithine carbamoyltransferase"/>
    <property type="match status" value="2"/>
</dbReference>
<dbReference type="HAMAP" id="MF_00001">
    <property type="entry name" value="Asp_carb_tr"/>
    <property type="match status" value="1"/>
</dbReference>
<dbReference type="InterPro" id="IPR006132">
    <property type="entry name" value="Asp/Orn_carbamoyltranf_P-bd"/>
</dbReference>
<dbReference type="InterPro" id="IPR006130">
    <property type="entry name" value="Asp/Orn_carbamoylTrfase"/>
</dbReference>
<dbReference type="InterPro" id="IPR036901">
    <property type="entry name" value="Asp/Orn_carbamoylTrfase_sf"/>
</dbReference>
<dbReference type="InterPro" id="IPR002082">
    <property type="entry name" value="Asp_carbamoyltransf"/>
</dbReference>
<dbReference type="InterPro" id="IPR006131">
    <property type="entry name" value="Asp_carbamoyltransf_Asp/Orn-bd"/>
</dbReference>
<dbReference type="NCBIfam" id="TIGR00670">
    <property type="entry name" value="asp_carb_tr"/>
    <property type="match status" value="1"/>
</dbReference>
<dbReference type="NCBIfam" id="NF002032">
    <property type="entry name" value="PRK00856.1"/>
    <property type="match status" value="1"/>
</dbReference>
<dbReference type="PANTHER" id="PTHR45753:SF6">
    <property type="entry name" value="ASPARTATE CARBAMOYLTRANSFERASE"/>
    <property type="match status" value="1"/>
</dbReference>
<dbReference type="PANTHER" id="PTHR45753">
    <property type="entry name" value="ORNITHINE CARBAMOYLTRANSFERASE, MITOCHONDRIAL"/>
    <property type="match status" value="1"/>
</dbReference>
<dbReference type="Pfam" id="PF00185">
    <property type="entry name" value="OTCace"/>
    <property type="match status" value="1"/>
</dbReference>
<dbReference type="Pfam" id="PF02729">
    <property type="entry name" value="OTCace_N"/>
    <property type="match status" value="1"/>
</dbReference>
<dbReference type="PRINTS" id="PR00100">
    <property type="entry name" value="AOTCASE"/>
</dbReference>
<dbReference type="PRINTS" id="PR00101">
    <property type="entry name" value="ATCASE"/>
</dbReference>
<dbReference type="SUPFAM" id="SSF53671">
    <property type="entry name" value="Aspartate/ornithine carbamoyltransferase"/>
    <property type="match status" value="1"/>
</dbReference>
<dbReference type="PROSITE" id="PS00097">
    <property type="entry name" value="CARBAMOYLTRANSFERASE"/>
    <property type="match status" value="1"/>
</dbReference>
<accession>A6UQU0</accession>
<organism>
    <name type="scientific">Methanococcus vannielii (strain ATCC 35089 / DSM 1224 / JCM 13029 / OCM 148 / SB)</name>
    <dbReference type="NCBI Taxonomy" id="406327"/>
    <lineage>
        <taxon>Archaea</taxon>
        <taxon>Methanobacteriati</taxon>
        <taxon>Methanobacteriota</taxon>
        <taxon>Methanomada group</taxon>
        <taxon>Methanococci</taxon>
        <taxon>Methanococcales</taxon>
        <taxon>Methanococcaceae</taxon>
        <taxon>Methanococcus</taxon>
    </lineage>
</organism>
<reference key="1">
    <citation type="submission" date="2007-06" db="EMBL/GenBank/DDBJ databases">
        <title>Complete sequence of Methanococcus vannielii SB.</title>
        <authorList>
            <consortium name="US DOE Joint Genome Institute"/>
            <person name="Copeland A."/>
            <person name="Lucas S."/>
            <person name="Lapidus A."/>
            <person name="Barry K."/>
            <person name="Glavina del Rio T."/>
            <person name="Dalin E."/>
            <person name="Tice H."/>
            <person name="Pitluck S."/>
            <person name="Chain P."/>
            <person name="Malfatti S."/>
            <person name="Shin M."/>
            <person name="Vergez L."/>
            <person name="Schmutz J."/>
            <person name="Larimer F."/>
            <person name="Land M."/>
            <person name="Hauser L."/>
            <person name="Kyrpides N."/>
            <person name="Anderson I."/>
            <person name="Sieprawska-Lupa M."/>
            <person name="Whitman W.B."/>
            <person name="Richardson P."/>
        </authorList>
    </citation>
    <scope>NUCLEOTIDE SEQUENCE [LARGE SCALE GENOMIC DNA]</scope>
    <source>
        <strain>ATCC 35089 / DSM 1224 / JCM 13029 / OCM 148 / SB</strain>
    </source>
</reference>
<proteinExistence type="inferred from homology"/>
<evidence type="ECO:0000255" key="1">
    <source>
        <dbReference type="HAMAP-Rule" id="MF_00001"/>
    </source>
</evidence>
<feature type="chain" id="PRO_1000000016" description="Aspartate carbamoyltransferase catalytic subunit">
    <location>
        <begin position="1"/>
        <end position="302"/>
    </location>
</feature>
<feature type="binding site" evidence="1">
    <location>
        <position position="53"/>
    </location>
    <ligand>
        <name>carbamoyl phosphate</name>
        <dbReference type="ChEBI" id="CHEBI:58228"/>
    </ligand>
</feature>
<feature type="binding site" evidence="1">
    <location>
        <position position="54"/>
    </location>
    <ligand>
        <name>carbamoyl phosphate</name>
        <dbReference type="ChEBI" id="CHEBI:58228"/>
    </ligand>
</feature>
<feature type="binding site" evidence="1">
    <location>
        <position position="82"/>
    </location>
    <ligand>
        <name>L-aspartate</name>
        <dbReference type="ChEBI" id="CHEBI:29991"/>
    </ligand>
</feature>
<feature type="binding site" evidence="1">
    <location>
        <position position="103"/>
    </location>
    <ligand>
        <name>carbamoyl phosphate</name>
        <dbReference type="ChEBI" id="CHEBI:58228"/>
    </ligand>
</feature>
<feature type="binding site" evidence="1">
    <location>
        <position position="131"/>
    </location>
    <ligand>
        <name>carbamoyl phosphate</name>
        <dbReference type="ChEBI" id="CHEBI:58228"/>
    </ligand>
</feature>
<feature type="binding site" evidence="1">
    <location>
        <position position="134"/>
    </location>
    <ligand>
        <name>carbamoyl phosphate</name>
        <dbReference type="ChEBI" id="CHEBI:58228"/>
    </ligand>
</feature>
<feature type="binding site" evidence="1">
    <location>
        <position position="164"/>
    </location>
    <ligand>
        <name>L-aspartate</name>
        <dbReference type="ChEBI" id="CHEBI:29991"/>
    </ligand>
</feature>
<feature type="binding site" evidence="1">
    <location>
        <position position="223"/>
    </location>
    <ligand>
        <name>L-aspartate</name>
        <dbReference type="ChEBI" id="CHEBI:29991"/>
    </ligand>
</feature>
<feature type="binding site" evidence="1">
    <location>
        <position position="260"/>
    </location>
    <ligand>
        <name>carbamoyl phosphate</name>
        <dbReference type="ChEBI" id="CHEBI:58228"/>
    </ligand>
</feature>
<feature type="binding site" evidence="1">
    <location>
        <position position="261"/>
    </location>
    <ligand>
        <name>carbamoyl phosphate</name>
        <dbReference type="ChEBI" id="CHEBI:58228"/>
    </ligand>
</feature>
<name>PYRB_METVS</name>
<comment type="function">
    <text evidence="1">Catalyzes the condensation of carbamoyl phosphate and aspartate to form carbamoyl aspartate and inorganic phosphate, the committed step in the de novo pyrimidine nucleotide biosynthesis pathway.</text>
</comment>
<comment type="catalytic activity">
    <reaction evidence="1">
        <text>carbamoyl phosphate + L-aspartate = N-carbamoyl-L-aspartate + phosphate + H(+)</text>
        <dbReference type="Rhea" id="RHEA:20013"/>
        <dbReference type="ChEBI" id="CHEBI:15378"/>
        <dbReference type="ChEBI" id="CHEBI:29991"/>
        <dbReference type="ChEBI" id="CHEBI:32814"/>
        <dbReference type="ChEBI" id="CHEBI:43474"/>
        <dbReference type="ChEBI" id="CHEBI:58228"/>
        <dbReference type="EC" id="2.1.3.2"/>
    </reaction>
</comment>
<comment type="pathway">
    <text evidence="1">Pyrimidine metabolism; UMP biosynthesis via de novo pathway; (S)-dihydroorotate from bicarbonate: step 2/3.</text>
</comment>
<comment type="subunit">
    <text evidence="1">Heterooligomer of catalytic and regulatory chains.</text>
</comment>
<comment type="similarity">
    <text evidence="1">Belongs to the aspartate/ornithine carbamoyltransferase superfamily. ATCase family.</text>
</comment>
<protein>
    <recommendedName>
        <fullName evidence="1">Aspartate carbamoyltransferase catalytic subunit</fullName>
        <ecNumber evidence="1">2.1.3.2</ecNumber>
    </recommendedName>
    <alternativeName>
        <fullName evidence="1">Aspartate transcarbamylase</fullName>
        <shortName evidence="1">ATCase</shortName>
    </alternativeName>
</protein>
<keyword id="KW-0665">Pyrimidine biosynthesis</keyword>
<keyword id="KW-0808">Transferase</keyword>
<gene>
    <name evidence="1" type="primary">pyrB</name>
    <name type="ordered locus">Mevan_0959</name>
</gene>